<evidence type="ECO:0000255" key="1">
    <source>
        <dbReference type="HAMAP-Rule" id="MF_00251"/>
    </source>
</evidence>
<evidence type="ECO:0000305" key="2"/>
<accession>A4WFA7</accession>
<proteinExistence type="inferred from homology"/>
<sequence>MKVRASVKKLCRNCKIVKREGVIRVICSAEPKHKQRQG</sequence>
<keyword id="KW-0687">Ribonucleoprotein</keyword>
<keyword id="KW-0689">Ribosomal protein</keyword>
<organism>
    <name type="scientific">Enterobacter sp. (strain 638)</name>
    <dbReference type="NCBI Taxonomy" id="399742"/>
    <lineage>
        <taxon>Bacteria</taxon>
        <taxon>Pseudomonadati</taxon>
        <taxon>Pseudomonadota</taxon>
        <taxon>Gammaproteobacteria</taxon>
        <taxon>Enterobacterales</taxon>
        <taxon>Enterobacteriaceae</taxon>
        <taxon>Enterobacter</taxon>
    </lineage>
</organism>
<reference key="1">
    <citation type="journal article" date="2010" name="PLoS Genet.">
        <title>Genome sequence of the plant growth promoting endophytic bacterium Enterobacter sp. 638.</title>
        <authorList>
            <person name="Taghavi S."/>
            <person name="van der Lelie D."/>
            <person name="Hoffman A."/>
            <person name="Zhang Y.B."/>
            <person name="Walla M.D."/>
            <person name="Vangronsveld J."/>
            <person name="Newman L."/>
            <person name="Monchy S."/>
        </authorList>
    </citation>
    <scope>NUCLEOTIDE SEQUENCE [LARGE SCALE GENOMIC DNA]</scope>
    <source>
        <strain>638</strain>
    </source>
</reference>
<gene>
    <name evidence="1" type="primary">rpmJ1</name>
    <name type="ordered locus">Ent638_3730</name>
</gene>
<feature type="chain" id="PRO_0000344666" description="Large ribosomal subunit protein bL36A">
    <location>
        <begin position="1"/>
        <end position="38"/>
    </location>
</feature>
<comment type="similarity">
    <text evidence="1">Belongs to the bacterial ribosomal protein bL36 family.</text>
</comment>
<name>RL361_ENT38</name>
<dbReference type="EMBL" id="CP000653">
    <property type="protein sequence ID" value="ABP62387.1"/>
    <property type="molecule type" value="Genomic_DNA"/>
</dbReference>
<dbReference type="RefSeq" id="WP_015960705.1">
    <property type="nucleotide sequence ID" value="NC_009436.1"/>
</dbReference>
<dbReference type="SMR" id="A4WFA7"/>
<dbReference type="STRING" id="399742.Ent638_3730"/>
<dbReference type="GeneID" id="93306705"/>
<dbReference type="KEGG" id="ent:Ent638_3730"/>
<dbReference type="eggNOG" id="COG0257">
    <property type="taxonomic scope" value="Bacteria"/>
</dbReference>
<dbReference type="HOGENOM" id="CLU_135723_6_2_6"/>
<dbReference type="OrthoDB" id="9802520at2"/>
<dbReference type="Proteomes" id="UP000000230">
    <property type="component" value="Chromosome"/>
</dbReference>
<dbReference type="GO" id="GO:0005737">
    <property type="term" value="C:cytoplasm"/>
    <property type="evidence" value="ECO:0007669"/>
    <property type="project" value="UniProtKB-ARBA"/>
</dbReference>
<dbReference type="GO" id="GO:1990904">
    <property type="term" value="C:ribonucleoprotein complex"/>
    <property type="evidence" value="ECO:0007669"/>
    <property type="project" value="UniProtKB-KW"/>
</dbReference>
<dbReference type="GO" id="GO:0005840">
    <property type="term" value="C:ribosome"/>
    <property type="evidence" value="ECO:0007669"/>
    <property type="project" value="UniProtKB-KW"/>
</dbReference>
<dbReference type="GO" id="GO:0003735">
    <property type="term" value="F:structural constituent of ribosome"/>
    <property type="evidence" value="ECO:0007669"/>
    <property type="project" value="InterPro"/>
</dbReference>
<dbReference type="GO" id="GO:0006412">
    <property type="term" value="P:translation"/>
    <property type="evidence" value="ECO:0007669"/>
    <property type="project" value="UniProtKB-UniRule"/>
</dbReference>
<dbReference type="HAMAP" id="MF_00251">
    <property type="entry name" value="Ribosomal_bL36"/>
    <property type="match status" value="1"/>
</dbReference>
<dbReference type="InterPro" id="IPR000473">
    <property type="entry name" value="Ribosomal_bL36"/>
</dbReference>
<dbReference type="InterPro" id="IPR035977">
    <property type="entry name" value="Ribosomal_bL36_sp"/>
</dbReference>
<dbReference type="NCBIfam" id="TIGR01022">
    <property type="entry name" value="rpmJ_bact"/>
    <property type="match status" value="1"/>
</dbReference>
<dbReference type="PANTHER" id="PTHR42888">
    <property type="entry name" value="50S RIBOSOMAL PROTEIN L36, CHLOROPLASTIC"/>
    <property type="match status" value="1"/>
</dbReference>
<dbReference type="PANTHER" id="PTHR42888:SF1">
    <property type="entry name" value="LARGE RIBOSOMAL SUBUNIT PROTEIN BL36C"/>
    <property type="match status" value="1"/>
</dbReference>
<dbReference type="Pfam" id="PF00444">
    <property type="entry name" value="Ribosomal_L36"/>
    <property type="match status" value="1"/>
</dbReference>
<dbReference type="SUPFAM" id="SSF57840">
    <property type="entry name" value="Ribosomal protein L36"/>
    <property type="match status" value="1"/>
</dbReference>
<dbReference type="PROSITE" id="PS00828">
    <property type="entry name" value="RIBOSOMAL_L36"/>
    <property type="match status" value="1"/>
</dbReference>
<protein>
    <recommendedName>
        <fullName evidence="1">Large ribosomal subunit protein bL36A</fullName>
    </recommendedName>
    <alternativeName>
        <fullName evidence="2">50S ribosomal protein L36 1</fullName>
    </alternativeName>
</protein>